<dbReference type="EMBL" id="X72224">
    <property type="protein sequence ID" value="CAA51026.1"/>
    <property type="molecule type" value="Genomic_DNA"/>
</dbReference>
<dbReference type="EMBL" id="X74437">
    <property type="protein sequence ID" value="CAA52450.1"/>
    <property type="molecule type" value="Genomic_DNA"/>
</dbReference>
<dbReference type="EMBL" id="Z36039">
    <property type="protein sequence ID" value="CAA85131.1"/>
    <property type="molecule type" value="Genomic_DNA"/>
</dbReference>
<dbReference type="EMBL" id="BK006936">
    <property type="protein sequence ID" value="DAA07286.1"/>
    <property type="molecule type" value="Genomic_DNA"/>
</dbReference>
<dbReference type="PIR" id="S34340">
    <property type="entry name" value="S34340"/>
</dbReference>
<dbReference type="RefSeq" id="NP_009729.1">
    <property type="nucleotide sequence ID" value="NM_001178518.1"/>
</dbReference>
<dbReference type="PDB" id="6JWH">
    <property type="method" value="X-ray"/>
    <property type="resolution" value="1.72 A"/>
    <property type="chains" value="A=113-580"/>
</dbReference>
<dbReference type="PDB" id="6JWI">
    <property type="method" value="X-ray"/>
    <property type="resolution" value="2.55 A"/>
    <property type="chains" value="A/E=113-580"/>
</dbReference>
<dbReference type="PDB" id="6JWJ">
    <property type="method" value="X-ray"/>
    <property type="resolution" value="1.58 A"/>
    <property type="chains" value="A=113-580"/>
</dbReference>
<dbReference type="PDB" id="6OA9">
    <property type="method" value="EM"/>
    <property type="resolution" value="3.90 A"/>
    <property type="chains" value="G=1-580"/>
</dbReference>
<dbReference type="PDB" id="6OAA">
    <property type="method" value="EM"/>
    <property type="resolution" value="4.10 A"/>
    <property type="chains" value="G=1-580"/>
</dbReference>
<dbReference type="PDB" id="8DAR">
    <property type="method" value="EM"/>
    <property type="resolution" value="3.00 A"/>
    <property type="chains" value="G=1-580"/>
</dbReference>
<dbReference type="PDB" id="8DAS">
    <property type="method" value="EM"/>
    <property type="resolution" value="3.50 A"/>
    <property type="chains" value="G=1-580"/>
</dbReference>
<dbReference type="PDB" id="8DAT">
    <property type="method" value="EM"/>
    <property type="resolution" value="3.80 A"/>
    <property type="chains" value="G=1-580"/>
</dbReference>
<dbReference type="PDB" id="8DAU">
    <property type="method" value="EM"/>
    <property type="resolution" value="3.70 A"/>
    <property type="chains" value="G=1-580"/>
</dbReference>
<dbReference type="PDB" id="8DAV">
    <property type="method" value="EM"/>
    <property type="resolution" value="3.50 A"/>
    <property type="chains" value="G=1-580"/>
</dbReference>
<dbReference type="PDB" id="8DAW">
    <property type="method" value="EM"/>
    <property type="resolution" value="3.60 A"/>
    <property type="chains" value="G=1-580"/>
</dbReference>
<dbReference type="PDBsum" id="6JWH"/>
<dbReference type="PDBsum" id="6JWI"/>
<dbReference type="PDBsum" id="6JWJ"/>
<dbReference type="PDBsum" id="6OA9"/>
<dbReference type="PDBsum" id="6OAA"/>
<dbReference type="PDBsum" id="8DAR"/>
<dbReference type="PDBsum" id="8DAS"/>
<dbReference type="PDBsum" id="8DAT"/>
<dbReference type="PDBsum" id="8DAU"/>
<dbReference type="PDBsum" id="8DAV"/>
<dbReference type="PDBsum" id="8DAW"/>
<dbReference type="EMDB" id="EMD-0665"/>
<dbReference type="EMDB" id="EMD-0666"/>
<dbReference type="EMDB" id="EMD-27273"/>
<dbReference type="EMDB" id="EMD-27274"/>
<dbReference type="EMDB" id="EMD-27275"/>
<dbReference type="EMDB" id="EMD-27276"/>
<dbReference type="EMDB" id="EMD-27277"/>
<dbReference type="EMDB" id="EMD-27278"/>
<dbReference type="SMR" id="P33755"/>
<dbReference type="BioGRID" id="32870">
    <property type="interactions" value="281"/>
</dbReference>
<dbReference type="ComplexPortal" id="CPX-2946">
    <property type="entry name" value="CDC48-NPL4-UFD1 AAA ATPase complex"/>
</dbReference>
<dbReference type="ComplexPortal" id="CPX-3069">
    <property type="entry name" value="CDC48-NPL4-VMS1 AAA ATPase complex"/>
</dbReference>
<dbReference type="ComplexPortal" id="CPX-3265">
    <property type="entry name" value="Ribosome quality control complex"/>
</dbReference>
<dbReference type="DIP" id="DIP-1475N"/>
<dbReference type="FunCoup" id="P33755">
    <property type="interactions" value="1113"/>
</dbReference>
<dbReference type="IntAct" id="P33755">
    <property type="interactions" value="21"/>
</dbReference>
<dbReference type="MINT" id="P33755"/>
<dbReference type="STRING" id="4932.YBR170C"/>
<dbReference type="TCDB" id="3.A.16.1.2">
    <property type="family name" value="the endoplasmic reticular retrotranslocon (er-rt) family"/>
</dbReference>
<dbReference type="iPTMnet" id="P33755"/>
<dbReference type="PaxDb" id="4932-YBR170C"/>
<dbReference type="PeptideAtlas" id="P33755"/>
<dbReference type="EnsemblFungi" id="YBR170C_mRNA">
    <property type="protein sequence ID" value="YBR170C"/>
    <property type="gene ID" value="YBR170C"/>
</dbReference>
<dbReference type="GeneID" id="852468"/>
<dbReference type="KEGG" id="sce:YBR170C"/>
<dbReference type="AGR" id="SGD:S000000374"/>
<dbReference type="SGD" id="S000000374">
    <property type="gene designation" value="NPL4"/>
</dbReference>
<dbReference type="VEuPathDB" id="FungiDB:YBR170C"/>
<dbReference type="eggNOG" id="KOG2834">
    <property type="taxonomic scope" value="Eukaryota"/>
</dbReference>
<dbReference type="GeneTree" id="ENSGT00390000018731"/>
<dbReference type="HOGENOM" id="CLU_017172_0_0_1"/>
<dbReference type="InParanoid" id="P33755"/>
<dbReference type="OMA" id="KWSRTGR"/>
<dbReference type="OrthoDB" id="10251089at2759"/>
<dbReference type="BioCyc" id="YEAST:G3O-29118-MONOMER"/>
<dbReference type="Reactome" id="R-SCE-110320">
    <property type="pathway name" value="Translesion Synthesis by POLH"/>
</dbReference>
<dbReference type="Reactome" id="R-SCE-8951664">
    <property type="pathway name" value="Neddylation"/>
</dbReference>
<dbReference type="Reactome" id="R-SCE-9755511">
    <property type="pathway name" value="KEAP1-NFE2L2 pathway"/>
</dbReference>
<dbReference type="BioGRID-ORCS" id="852468">
    <property type="hits" value="6 hits in 10 CRISPR screens"/>
</dbReference>
<dbReference type="PRO" id="PR:P33755"/>
<dbReference type="Proteomes" id="UP000002311">
    <property type="component" value="Chromosome II"/>
</dbReference>
<dbReference type="RNAct" id="P33755">
    <property type="molecule type" value="protein"/>
</dbReference>
<dbReference type="GO" id="GO:0036266">
    <property type="term" value="C:Cdc48p-Npl4p-Vms1p AAA ATPase complex"/>
    <property type="evidence" value="ECO:0000314"/>
    <property type="project" value="SGD"/>
</dbReference>
<dbReference type="GO" id="GO:0005737">
    <property type="term" value="C:cytoplasm"/>
    <property type="evidence" value="ECO:0007005"/>
    <property type="project" value="SGD"/>
</dbReference>
<dbReference type="GO" id="GO:0000837">
    <property type="term" value="C:Doa10p ubiquitin ligase complex"/>
    <property type="evidence" value="ECO:0000314"/>
    <property type="project" value="SGD"/>
</dbReference>
<dbReference type="GO" id="GO:0000839">
    <property type="term" value="C:Hrd1p ubiquitin ligase ERAD-L complex"/>
    <property type="evidence" value="ECO:0000314"/>
    <property type="project" value="SGD"/>
</dbReference>
<dbReference type="GO" id="GO:0031965">
    <property type="term" value="C:nuclear membrane"/>
    <property type="evidence" value="ECO:0007669"/>
    <property type="project" value="UniProtKB-SubCell"/>
</dbReference>
<dbReference type="GO" id="GO:0042175">
    <property type="term" value="C:nuclear outer membrane-endoplasmic reticulum membrane network"/>
    <property type="evidence" value="ECO:0000314"/>
    <property type="project" value="SGD"/>
</dbReference>
<dbReference type="GO" id="GO:0005634">
    <property type="term" value="C:nucleus"/>
    <property type="evidence" value="ECO:0007005"/>
    <property type="project" value="SGD"/>
</dbReference>
<dbReference type="GO" id="GO:0048471">
    <property type="term" value="C:perinuclear region of cytoplasm"/>
    <property type="evidence" value="ECO:0007669"/>
    <property type="project" value="UniProtKB-SubCell"/>
</dbReference>
<dbReference type="GO" id="GO:0030894">
    <property type="term" value="C:replisome"/>
    <property type="evidence" value="ECO:0000314"/>
    <property type="project" value="SGD"/>
</dbReference>
<dbReference type="GO" id="GO:1990112">
    <property type="term" value="C:RQC complex"/>
    <property type="evidence" value="ECO:0000314"/>
    <property type="project" value="SGD"/>
</dbReference>
<dbReference type="GO" id="GO:0034098">
    <property type="term" value="C:VCP-NPL4-UFD1 AAA ATPase complex"/>
    <property type="evidence" value="ECO:0000314"/>
    <property type="project" value="SGD"/>
</dbReference>
<dbReference type="GO" id="GO:0036435">
    <property type="term" value="F:K48-linked polyubiquitin modification-dependent protein binding"/>
    <property type="evidence" value="ECO:0000314"/>
    <property type="project" value="SGD"/>
</dbReference>
<dbReference type="GO" id="GO:0043130">
    <property type="term" value="F:ubiquitin binding"/>
    <property type="evidence" value="ECO:0000318"/>
    <property type="project" value="GO_Central"/>
</dbReference>
<dbReference type="GO" id="GO:0031625">
    <property type="term" value="F:ubiquitin protein ligase binding"/>
    <property type="evidence" value="ECO:0000318"/>
    <property type="project" value="GO_Central"/>
</dbReference>
<dbReference type="GO" id="GO:0071629">
    <property type="term" value="P:cytoplasm protein quality control by the ubiquitin-proteasome system"/>
    <property type="evidence" value="ECO:0000315"/>
    <property type="project" value="SGD"/>
</dbReference>
<dbReference type="GO" id="GO:0006274">
    <property type="term" value="P:DNA replication termination"/>
    <property type="evidence" value="ECO:0000314"/>
    <property type="project" value="SGD"/>
</dbReference>
<dbReference type="GO" id="GO:0099638">
    <property type="term" value="P:endosome to plasma membrane protein transport"/>
    <property type="evidence" value="ECO:0000315"/>
    <property type="project" value="SGD"/>
</dbReference>
<dbReference type="GO" id="GO:0036503">
    <property type="term" value="P:ERAD pathway"/>
    <property type="evidence" value="ECO:0000314"/>
    <property type="project" value="ComplexPortal"/>
</dbReference>
<dbReference type="GO" id="GO:0072671">
    <property type="term" value="P:mitochondria-associated ubiquitin-dependent protein catabolic process"/>
    <property type="evidence" value="ECO:0000315"/>
    <property type="project" value="UniProtKB"/>
</dbReference>
<dbReference type="GO" id="GO:0051228">
    <property type="term" value="P:mitotic spindle disassembly"/>
    <property type="evidence" value="ECO:0000315"/>
    <property type="project" value="SGD"/>
</dbReference>
<dbReference type="GO" id="GO:0051028">
    <property type="term" value="P:mRNA transport"/>
    <property type="evidence" value="ECO:0007669"/>
    <property type="project" value="UniProtKB-KW"/>
</dbReference>
<dbReference type="GO" id="GO:0070651">
    <property type="term" value="P:nonfunctional rRNA decay"/>
    <property type="evidence" value="ECO:0000315"/>
    <property type="project" value="SGD"/>
</dbReference>
<dbReference type="GO" id="GO:1900182">
    <property type="term" value="P:positive regulation of protein localization to nucleus"/>
    <property type="evidence" value="ECO:0000315"/>
    <property type="project" value="SGD"/>
</dbReference>
<dbReference type="GO" id="GO:0043161">
    <property type="term" value="P:proteasome-mediated ubiquitin-dependent protein catabolic process"/>
    <property type="evidence" value="ECO:0000315"/>
    <property type="project" value="SGD"/>
</dbReference>
<dbReference type="GO" id="GO:0072665">
    <property type="term" value="P:protein localization to vacuole"/>
    <property type="evidence" value="ECO:0000315"/>
    <property type="project" value="SGD"/>
</dbReference>
<dbReference type="GO" id="GO:0006515">
    <property type="term" value="P:protein quality control for misfolded or incompletely synthesized proteins"/>
    <property type="evidence" value="ECO:0000303"/>
    <property type="project" value="ComplexPortal"/>
</dbReference>
<dbReference type="GO" id="GO:0072344">
    <property type="term" value="P:rescue of stalled ribosome"/>
    <property type="evidence" value="ECO:0000303"/>
    <property type="project" value="ComplexPortal"/>
</dbReference>
<dbReference type="GO" id="GO:0030970">
    <property type="term" value="P:retrograde protein transport, ER to cytosol"/>
    <property type="evidence" value="ECO:0000315"/>
    <property type="project" value="SGD"/>
</dbReference>
<dbReference type="GO" id="GO:1990116">
    <property type="term" value="P:ribosome-associated ubiquitin-dependent protein catabolic process"/>
    <property type="evidence" value="ECO:0000315"/>
    <property type="project" value="SGD"/>
</dbReference>
<dbReference type="GO" id="GO:0006511">
    <property type="term" value="P:ubiquitin-dependent protein catabolic process"/>
    <property type="evidence" value="ECO:0000318"/>
    <property type="project" value="GO_Central"/>
</dbReference>
<dbReference type="CDD" id="cd08061">
    <property type="entry name" value="MPN_NPL4"/>
    <property type="match status" value="1"/>
</dbReference>
<dbReference type="Gene3D" id="3.10.20.90">
    <property type="entry name" value="Phosphatidylinositol 3-kinase Catalytic Subunit, Chain A, domain 1"/>
    <property type="match status" value="1"/>
</dbReference>
<dbReference type="InterPro" id="IPR037518">
    <property type="entry name" value="MPN"/>
</dbReference>
<dbReference type="InterPro" id="IPR016563">
    <property type="entry name" value="Npl4"/>
</dbReference>
<dbReference type="InterPro" id="IPR007717">
    <property type="entry name" value="NPL4_C"/>
</dbReference>
<dbReference type="InterPro" id="IPR007716">
    <property type="entry name" value="NPL4_Zn-bd_put"/>
</dbReference>
<dbReference type="InterPro" id="IPR029071">
    <property type="entry name" value="Ubiquitin-like_domsf"/>
</dbReference>
<dbReference type="PANTHER" id="PTHR12710">
    <property type="entry name" value="NUCLEAR PROTEIN LOCALIZATION 4"/>
    <property type="match status" value="1"/>
</dbReference>
<dbReference type="PANTHER" id="PTHR12710:SF0">
    <property type="entry name" value="NUCLEAR PROTEIN LOCALIZATION PROTEIN 4 HOMOLOG"/>
    <property type="match status" value="1"/>
</dbReference>
<dbReference type="Pfam" id="PF05021">
    <property type="entry name" value="NPL4"/>
    <property type="match status" value="1"/>
</dbReference>
<dbReference type="Pfam" id="PF05020">
    <property type="entry name" value="zf-NPL4"/>
    <property type="match status" value="1"/>
</dbReference>
<dbReference type="PIRSF" id="PIRSF010052">
    <property type="entry name" value="Polyub_prc_Npl4"/>
    <property type="match status" value="1"/>
</dbReference>
<dbReference type="SUPFAM" id="SSF54236">
    <property type="entry name" value="Ubiquitin-like"/>
    <property type="match status" value="1"/>
</dbReference>
<dbReference type="PROSITE" id="PS50249">
    <property type="entry name" value="MPN"/>
    <property type="match status" value="1"/>
</dbReference>
<evidence type="ECO:0000255" key="1">
    <source>
        <dbReference type="PROSITE-ProRule" id="PRU01182"/>
    </source>
</evidence>
<evidence type="ECO:0000269" key="2">
    <source>
    </source>
</evidence>
<evidence type="ECO:0000269" key="3">
    <source>
    </source>
</evidence>
<evidence type="ECO:0000269" key="4">
    <source>
    </source>
</evidence>
<evidence type="ECO:0000269" key="5">
    <source>
    </source>
</evidence>
<evidence type="ECO:0000269" key="6">
    <source>
    </source>
</evidence>
<evidence type="ECO:0000269" key="7">
    <source>
    </source>
</evidence>
<evidence type="ECO:0000269" key="8">
    <source>
    </source>
</evidence>
<evidence type="ECO:0000269" key="9">
    <source>
    </source>
</evidence>
<evidence type="ECO:0000269" key="10">
    <source>
    </source>
</evidence>
<evidence type="ECO:0000269" key="11">
    <source>
    </source>
</evidence>
<evidence type="ECO:0000269" key="12">
    <source>
    </source>
</evidence>
<evidence type="ECO:0000269" key="13">
    <source>
    </source>
</evidence>
<evidence type="ECO:0000305" key="14"/>
<evidence type="ECO:0007744" key="15">
    <source>
        <dbReference type="PDB" id="6OA9"/>
    </source>
</evidence>
<evidence type="ECO:0007744" key="16">
    <source>
        <dbReference type="PDB" id="6OAA"/>
    </source>
</evidence>
<evidence type="ECO:0007829" key="17">
    <source>
        <dbReference type="PDB" id="6JWH"/>
    </source>
</evidence>
<evidence type="ECO:0007829" key="18">
    <source>
        <dbReference type="PDB" id="6JWI"/>
    </source>
</evidence>
<evidence type="ECO:0007829" key="19">
    <source>
        <dbReference type="PDB" id="6JWJ"/>
    </source>
</evidence>
<evidence type="ECO:0007829" key="20">
    <source>
        <dbReference type="PDB" id="8DAR"/>
    </source>
</evidence>
<evidence type="ECO:0007829" key="21">
    <source>
        <dbReference type="PDB" id="8DAS"/>
    </source>
</evidence>
<evidence type="ECO:0007829" key="22">
    <source>
        <dbReference type="PDB" id="8DAV"/>
    </source>
</evidence>
<accession>P33755</accession>
<accession>D6VQG6</accession>
<reference key="1">
    <citation type="journal article" date="1996" name="Mol. Biol. Cell">
        <title>Nuclear transport defects and nuclear envelope alterations are associated with mutation of the Saccharomyces cerevisiae NPL4 gene.</title>
        <authorList>
            <person name="DeHoratius C."/>
            <person name="Silver P.A."/>
        </authorList>
    </citation>
    <scope>NUCLEOTIDE SEQUENCE [GENOMIC DNA]</scope>
    <scope>FUNCTION</scope>
    <scope>SUBCELLULAR LOCATION</scope>
</reference>
<reference key="2">
    <citation type="journal article" date="1993" name="Yeast">
        <title>Sequence and function analysis of a 4.3 kb fragment of Saccharomyces cerevisiae chromosome II including three open reading frames.</title>
        <authorList>
            <person name="Schaaff-Gerstenschlaeger I."/>
            <person name="Bauer A."/>
            <person name="Boles E."/>
            <person name="Zimmermann F.K."/>
        </authorList>
    </citation>
    <scope>NUCLEOTIDE SEQUENCE [GENOMIC DNA]</scope>
    <source>
        <strain>ATCC 204508 / S288c</strain>
    </source>
</reference>
<reference key="3">
    <citation type="journal article" date="1994" name="EMBO J.">
        <title>Complete DNA sequence of yeast chromosome II.</title>
        <authorList>
            <person name="Feldmann H."/>
            <person name="Aigle M."/>
            <person name="Aljinovic G."/>
            <person name="Andre B."/>
            <person name="Baclet M.C."/>
            <person name="Barthe C."/>
            <person name="Baur A."/>
            <person name="Becam A.-M."/>
            <person name="Biteau N."/>
            <person name="Boles E."/>
            <person name="Brandt T."/>
            <person name="Brendel M."/>
            <person name="Brueckner M."/>
            <person name="Bussereau F."/>
            <person name="Christiansen C."/>
            <person name="Contreras R."/>
            <person name="Crouzet M."/>
            <person name="Cziepluch C."/>
            <person name="Demolis N."/>
            <person name="Delaveau T."/>
            <person name="Doignon F."/>
            <person name="Domdey H."/>
            <person name="Duesterhus S."/>
            <person name="Dubois E."/>
            <person name="Dujon B."/>
            <person name="El Bakkoury M."/>
            <person name="Entian K.-D."/>
            <person name="Feuermann M."/>
            <person name="Fiers W."/>
            <person name="Fobo G.M."/>
            <person name="Fritz C."/>
            <person name="Gassenhuber J."/>
            <person name="Glansdorff N."/>
            <person name="Goffeau A."/>
            <person name="Grivell L.A."/>
            <person name="de Haan M."/>
            <person name="Hein C."/>
            <person name="Herbert C.J."/>
            <person name="Hollenberg C.P."/>
            <person name="Holmstroem K."/>
            <person name="Jacq C."/>
            <person name="Jacquet M."/>
            <person name="Jauniaux J.-C."/>
            <person name="Jonniaux J.-L."/>
            <person name="Kallesoee T."/>
            <person name="Kiesau P."/>
            <person name="Kirchrath L."/>
            <person name="Koetter P."/>
            <person name="Korol S."/>
            <person name="Liebl S."/>
            <person name="Logghe M."/>
            <person name="Lohan A.J.E."/>
            <person name="Louis E.J."/>
            <person name="Li Z.Y."/>
            <person name="Maat M.J."/>
            <person name="Mallet L."/>
            <person name="Mannhaupt G."/>
            <person name="Messenguy F."/>
            <person name="Miosga T."/>
            <person name="Molemans F."/>
            <person name="Mueller S."/>
            <person name="Nasr F."/>
            <person name="Obermaier B."/>
            <person name="Perea J."/>
            <person name="Pierard A."/>
            <person name="Piravandi E."/>
            <person name="Pohl F.M."/>
            <person name="Pohl T.M."/>
            <person name="Potier S."/>
            <person name="Proft M."/>
            <person name="Purnelle B."/>
            <person name="Ramezani Rad M."/>
            <person name="Rieger M."/>
            <person name="Rose M."/>
            <person name="Schaaff-Gerstenschlaeger I."/>
            <person name="Scherens B."/>
            <person name="Schwarzlose C."/>
            <person name="Skala J."/>
            <person name="Slonimski P.P."/>
            <person name="Smits P.H.M."/>
            <person name="Souciet J.-L."/>
            <person name="Steensma H.Y."/>
            <person name="Stucka R."/>
            <person name="Urrestarazu L.A."/>
            <person name="van der Aart Q.J.M."/>
            <person name="Van Dyck L."/>
            <person name="Vassarotti A."/>
            <person name="Vetter I."/>
            <person name="Vierendeels F."/>
            <person name="Vissers S."/>
            <person name="Wagner G."/>
            <person name="de Wergifosse P."/>
            <person name="Wolfe K.H."/>
            <person name="Zagulski M."/>
            <person name="Zimmermann F.K."/>
            <person name="Mewes H.-W."/>
            <person name="Kleine K."/>
        </authorList>
    </citation>
    <scope>NUCLEOTIDE SEQUENCE [LARGE SCALE GENOMIC DNA]</scope>
    <source>
        <strain>ATCC 204508 / S288c</strain>
    </source>
</reference>
<reference key="4">
    <citation type="journal article" date="2014" name="G3 (Bethesda)">
        <title>The reference genome sequence of Saccharomyces cerevisiae: Then and now.</title>
        <authorList>
            <person name="Engel S.R."/>
            <person name="Dietrich F.S."/>
            <person name="Fisk D.G."/>
            <person name="Binkley G."/>
            <person name="Balakrishnan R."/>
            <person name="Costanzo M.C."/>
            <person name="Dwight S.S."/>
            <person name="Hitz B.C."/>
            <person name="Karra K."/>
            <person name="Nash R.S."/>
            <person name="Weng S."/>
            <person name="Wong E.D."/>
            <person name="Lloyd P."/>
            <person name="Skrzypek M.S."/>
            <person name="Miyasato S.R."/>
            <person name="Simison M."/>
            <person name="Cherry J.M."/>
        </authorList>
    </citation>
    <scope>GENOME REANNOTATION</scope>
    <source>
        <strain>ATCC 204508 / S288c</strain>
    </source>
</reference>
<reference key="5">
    <citation type="journal article" date="2001" name="Cell">
        <title>Mobilization of processed, membrane-tethered SPT23 transcription factor by CDC48(UFD1/NPL4), a ubiquitin-selective chaperone.</title>
        <authorList>
            <person name="Rape M."/>
            <person name="Hoppe T."/>
            <person name="Gorr I."/>
            <person name="Kalocay M."/>
            <person name="Richly H."/>
            <person name="Jentsch S."/>
        </authorList>
    </citation>
    <scope>FUNCTION</scope>
    <scope>INTERACTION WITH CDC48 AND UFD1</scope>
    <scope>SUBCELLULAR LOCATION</scope>
</reference>
<reference key="6">
    <citation type="journal article" date="2001" name="Mol. Biol. Cell">
        <title>The conserved npl4 protein complex mediates proteasome-dependent membrane-bound transcription factor activation.</title>
        <authorList>
            <person name="Hitchcock A.L."/>
            <person name="Krebber H."/>
            <person name="Frietze S."/>
            <person name="Lin A."/>
            <person name="Latterich M."/>
            <person name="Silver P.A."/>
        </authorList>
    </citation>
    <scope>FUNCTION</scope>
    <scope>INTERACTION WITH CDC48 AND UFD1</scope>
    <scope>SUBCELLULAR LOCATION</scope>
    <scope>MUTAGENESIS OF GLY-323</scope>
</reference>
<reference key="7">
    <citation type="journal article" date="2001" name="Mol. Biol. Cell">
        <title>HRD4/NPL4 is required for the proteasomal processing of ubiquitinated ER proteins.</title>
        <authorList>
            <person name="Bays N.W."/>
            <person name="Wilhovsky S.K."/>
            <person name="Goradia A."/>
            <person name="Hodgkiss-Harlow K."/>
            <person name="Hampton R.Y."/>
        </authorList>
    </citation>
    <scope>FUNCTION</scope>
    <scope>INTERACTION WITH CDC48 AND UFD1</scope>
    <scope>SUBCELLULAR LOCATION</scope>
</reference>
<reference key="8">
    <citation type="journal article" date="2001" name="Nature">
        <title>The AAA ATPase Cdc48/p97 and its partners transport proteins from the ER into the cytosol.</title>
        <authorList>
            <person name="Ye Y."/>
            <person name="Meyer H.H."/>
            <person name="Rapoport T.A."/>
        </authorList>
    </citation>
    <scope>FUNCTION</scope>
</reference>
<reference key="9">
    <citation type="journal article" date="2002" name="EMBO J.">
        <title>Role of the ubiquitin-selective CDC48(UFD1/NPL4) chaperone (segregase) in ERAD of OLE1 and other substrates.</title>
        <authorList>
            <person name="Braun S."/>
            <person name="Matuschewski K."/>
            <person name="Rape M."/>
            <person name="Thoms S."/>
            <person name="Jentsch S."/>
        </authorList>
    </citation>
    <scope>FUNCTION</scope>
</reference>
<reference key="10">
    <citation type="journal article" date="2003" name="Cell">
        <title>The AAA-ATPase Cdc48/p97 regulates spindle disassembly at the end of mitosis.</title>
        <authorList>
            <person name="Cao K."/>
            <person name="Nakajima R."/>
            <person name="Meyer H.H."/>
            <person name="Zheng Y."/>
        </authorList>
    </citation>
    <scope>FUNCTION</scope>
</reference>
<reference key="11">
    <citation type="journal article" date="2003" name="Nature">
        <title>Global analysis of protein expression in yeast.</title>
        <authorList>
            <person name="Ghaemmaghami S."/>
            <person name="Huh W.-K."/>
            <person name="Bower K."/>
            <person name="Howson R.W."/>
            <person name="Belle A."/>
            <person name="Dephoure N."/>
            <person name="O'Shea E.K."/>
            <person name="Weissman J.S."/>
        </authorList>
    </citation>
    <scope>LEVEL OF PROTEIN EXPRESSION [LARGE SCALE ANALYSIS]</scope>
</reference>
<reference key="12">
    <citation type="journal article" date="2006" name="Cell">
        <title>Distinct ubiquitin-ligase complexes define convergent pathways for the degradation of ER proteins.</title>
        <authorList>
            <person name="Carvalho P."/>
            <person name="Goder V."/>
            <person name="Rapoport T.A."/>
        </authorList>
    </citation>
    <scope>IDENTIFICATION IN CDC48-NPL4-UFD1 ATPASE COMPLEX</scope>
    <scope>INTERACTION WITH HRD1 COMPLEX</scope>
</reference>
<reference key="13">
    <citation type="journal article" date="2006" name="Mol. Cell">
        <title>Functional division of substrate processing cofactors of the ubiquitin-selective Cdc48 chaperone.</title>
        <authorList>
            <person name="Rumpf S."/>
            <person name="Jentsch S."/>
        </authorList>
    </citation>
    <scope>IDENTIFICATION IN A COMPLEX WITH DOA1; UFD1; CDC48; OTU1 AND SHP1</scope>
</reference>
<reference key="14">
    <citation type="journal article" date="2010" name="Mol. Cell">
        <title>A stress-responsive system for mitochondrial protein degradation.</title>
        <authorList>
            <person name="Heo J.M."/>
            <person name="Livnat-Levanon N."/>
            <person name="Taylor E.B."/>
            <person name="Jones K.T."/>
            <person name="Dephoure N."/>
            <person name="Ring J."/>
            <person name="Xie J."/>
            <person name="Brodsky J.L."/>
            <person name="Madeo F."/>
            <person name="Gygi S.P."/>
            <person name="Ashrafi K."/>
            <person name="Glickman M.H."/>
            <person name="Rutter J."/>
        </authorList>
    </citation>
    <scope>FUNCTION</scope>
    <scope>INTERACTION WITH VMS1</scope>
</reference>
<reference evidence="15 16" key="15">
    <citation type="journal article" date="2019" name="Science">
        <title>Substrate processing by the Cdc48 ATPase complex is initiated by ubiquitin unfolding.</title>
        <authorList>
            <person name="Twomey E.C."/>
            <person name="Ji Z."/>
            <person name="Wales T.E."/>
            <person name="Bodnar N.O."/>
            <person name="Ficarro S.B."/>
            <person name="Marto J.A."/>
            <person name="Engen J.R."/>
            <person name="Rapoport T.A."/>
        </authorList>
    </citation>
    <scope>STRUCTURE BY ELECTRON MICROSCOPY (3.90 ANGSTROMS) IN COMPLEX WITH CDC48 AND POLYUBIQUITINATED SUBSTRATE</scope>
    <scope>FUNCTION</scope>
</reference>
<comment type="function">
    <text evidence="3 4 5 6 8 12 13">Substrate-recruiting cofactor of the CDC48-NPL4-UFD1 segregase (PubMed:31249135). Assists CDC48 in the dislocation of misfolded, polyubiquitinated ERAD substrates that are subsequently delivered to the proteasome for degradation (PubMed:11739805, PubMed:11740563, PubMed:11847109). Involved in the import of nuclear-targeted proteins into the nucleus and the export of poly(A) RNA out of the nucleus (PubMed:11733065, PubMed:8930904). Required for the proteasome-dependent processing/activation of MGA2 and SPT23 transcription factors leading to the subsequent expression of OLE1 (PubMed:11733065). Regulates ubiquitin-mediated mitochondria protein degradation (PubMed:31249135). Involved in spindle disassembly probably by promoting the degradation of spindle assemby factors ASE1 and CDC5 at the end of mitosis (PubMed:14636562).</text>
</comment>
<comment type="subunit">
    <text evidence="2 3 4 9 10 11 12">Component of the heterotrimeric CDC48-NPL4-UFD1 ATPase complex (PubMed:16873066). The CDC48-NPL4-UFD1 ATPase complex interacts with the HRD1 ubiquitin ligase complex composed of the E3 ligase HRD1, its cofactors HRD3, USA1 and DER1, substrate recruiting factor YOS9 and CDC48-binding protein UBX2 (PubMed:16873066). Interaction between the complexes is mediated by interaction between CDC48-NPL4-UFD1 complex member CDC48 and HRD1 complex member UBX2 (PubMed:16873066). Forms a complex composed of CDC48, NPL4, UFD1, DOA1, SHP1 and deubiquitinase OTU1 (PubMed:16427015). Interacts with CDC48, UFD1 and VMS1 (PubMed:11598205, PubMed:11733065, PubMed:11739805, PubMed:21070972, PubMed:31249135).</text>
</comment>
<comment type="interaction">
    <interactant intactId="EBI-12193">
        <id>P33755</id>
    </interactant>
    <interactant intactId="EBI-4308">
        <id>P25694</id>
        <label>CDC48</label>
    </interactant>
    <organismsDiffer>false</organismsDiffer>
    <experiments>12</experiments>
</comment>
<comment type="interaction">
    <interactant intactId="EBI-12193">
        <id>P33755</id>
    </interactant>
    <interactant intactId="EBI-19997">
        <id>P53044</id>
        <label>UFD1</label>
    </interactant>
    <organismsDiffer>false</organismsDiffer>
    <experiments>12</experiments>
</comment>
<comment type="subcellular location">
    <subcellularLocation>
        <location>Cytoplasm</location>
        <location>Perinuclear region</location>
    </subcellularLocation>
    <subcellularLocation>
        <location>Endoplasmic reticulum membrane</location>
        <topology>Peripheral membrane protein</topology>
        <orientation>Cytoplasmic side</orientation>
    </subcellularLocation>
    <subcellularLocation>
        <location>Nucleus membrane</location>
        <topology>Peripheral membrane protein</topology>
        <orientation>Cytoplasmic side</orientation>
    </subcellularLocation>
    <text>Localizes mainly at the nuclear periphery and the endoplasmic reticulum membrane.</text>
</comment>
<comment type="miscellaneous">
    <text evidence="7">Present with 1050 molecules/cell in log phase SD medium.</text>
</comment>
<comment type="similarity">
    <text evidence="14">Belongs to the NPL4 family.</text>
</comment>
<keyword id="KW-0002">3D-structure</keyword>
<keyword id="KW-0963">Cytoplasm</keyword>
<keyword id="KW-0256">Endoplasmic reticulum</keyword>
<keyword id="KW-0472">Membrane</keyword>
<keyword id="KW-0509">mRNA transport</keyword>
<keyword id="KW-0539">Nucleus</keyword>
<keyword id="KW-0653">Protein transport</keyword>
<keyword id="KW-1185">Reference proteome</keyword>
<keyword id="KW-0811">Translocation</keyword>
<keyword id="KW-0813">Transport</keyword>
<gene>
    <name type="primary">NPL4</name>
    <name type="synonym">HRD4</name>
    <name type="ordered locus">YBR170C</name>
    <name type="ORF">YBR1231</name>
</gene>
<feature type="chain" id="PRO_0000057944" description="Nuclear protein localization protein 4">
    <location>
        <begin position="1"/>
        <end position="580"/>
    </location>
</feature>
<feature type="domain" description="MPN" evidence="1">
    <location>
        <begin position="237"/>
        <end position="377"/>
    </location>
</feature>
<feature type="mutagenesis site" description="In npl4-1; nuclear-targeted proteins accumulate in the cytoplasm." evidence="2">
    <original>G</original>
    <variation>S</variation>
    <location>
        <position position="323"/>
    </location>
</feature>
<feature type="helix" evidence="19">
    <location>
        <begin position="117"/>
        <end position="123"/>
    </location>
</feature>
<feature type="strand" evidence="18">
    <location>
        <begin position="141"/>
        <end position="143"/>
    </location>
</feature>
<feature type="turn" evidence="19">
    <location>
        <begin position="146"/>
        <end position="148"/>
    </location>
</feature>
<feature type="helix" evidence="19">
    <location>
        <begin position="156"/>
        <end position="161"/>
    </location>
</feature>
<feature type="strand" evidence="19">
    <location>
        <begin position="165"/>
        <end position="168"/>
    </location>
</feature>
<feature type="helix" evidence="19">
    <location>
        <begin position="169"/>
        <end position="180"/>
    </location>
</feature>
<feature type="strand" evidence="20">
    <location>
        <begin position="183"/>
        <end position="186"/>
    </location>
</feature>
<feature type="strand" evidence="19">
    <location>
        <begin position="206"/>
        <end position="208"/>
    </location>
</feature>
<feature type="turn" evidence="18">
    <location>
        <begin position="211"/>
        <end position="213"/>
    </location>
</feature>
<feature type="turn" evidence="19">
    <location>
        <begin position="217"/>
        <end position="219"/>
    </location>
</feature>
<feature type="strand" evidence="19">
    <location>
        <begin position="224"/>
        <end position="226"/>
    </location>
</feature>
<feature type="strand" evidence="19">
    <location>
        <begin position="230"/>
        <end position="233"/>
    </location>
</feature>
<feature type="strand" evidence="19">
    <location>
        <begin position="236"/>
        <end position="240"/>
    </location>
</feature>
<feature type="helix" evidence="19">
    <location>
        <begin position="242"/>
        <end position="255"/>
    </location>
</feature>
<feature type="strand" evidence="19">
    <location>
        <begin position="260"/>
        <end position="270"/>
    </location>
</feature>
<feature type="strand" evidence="19">
    <location>
        <begin position="276"/>
        <end position="285"/>
    </location>
</feature>
<feature type="strand" evidence="19">
    <location>
        <begin position="290"/>
        <end position="292"/>
    </location>
</feature>
<feature type="strand" evidence="19">
    <location>
        <begin position="295"/>
        <end position="297"/>
    </location>
</feature>
<feature type="helix" evidence="19">
    <location>
        <begin position="300"/>
        <end position="316"/>
    </location>
</feature>
<feature type="strand" evidence="19">
    <location>
        <begin position="320"/>
        <end position="328"/>
    </location>
</feature>
<feature type="strand" evidence="19">
    <location>
        <begin position="333"/>
        <end position="337"/>
    </location>
</feature>
<feature type="strand" evidence="20">
    <location>
        <begin position="345"/>
        <end position="347"/>
    </location>
</feature>
<feature type="helix" evidence="19">
    <location>
        <begin position="352"/>
        <end position="364"/>
    </location>
</feature>
<feature type="strand" evidence="19">
    <location>
        <begin position="365"/>
        <end position="368"/>
    </location>
</feature>
<feature type="strand" evidence="19">
    <location>
        <begin position="375"/>
        <end position="379"/>
    </location>
</feature>
<feature type="strand" evidence="19">
    <location>
        <begin position="382"/>
        <end position="388"/>
    </location>
</feature>
<feature type="strand" evidence="21">
    <location>
        <begin position="390"/>
        <end position="392"/>
    </location>
</feature>
<feature type="strand" evidence="19">
    <location>
        <begin position="394"/>
        <end position="401"/>
    </location>
</feature>
<feature type="helix" evidence="19">
    <location>
        <begin position="403"/>
        <end position="410"/>
    </location>
</feature>
<feature type="strand" evidence="17">
    <location>
        <begin position="414"/>
        <end position="416"/>
    </location>
</feature>
<feature type="strand" evidence="19">
    <location>
        <begin position="417"/>
        <end position="419"/>
    </location>
</feature>
<feature type="strand" evidence="19">
    <location>
        <begin position="422"/>
        <end position="425"/>
    </location>
</feature>
<feature type="strand" evidence="19">
    <location>
        <begin position="437"/>
        <end position="442"/>
    </location>
</feature>
<feature type="turn" evidence="21">
    <location>
        <begin position="444"/>
        <end position="446"/>
    </location>
</feature>
<feature type="strand" evidence="19">
    <location>
        <begin position="448"/>
        <end position="452"/>
    </location>
</feature>
<feature type="strand" evidence="19">
    <location>
        <begin position="455"/>
        <end position="458"/>
    </location>
</feature>
<feature type="helix" evidence="19">
    <location>
        <begin position="459"/>
        <end position="462"/>
    </location>
</feature>
<feature type="strand" evidence="19">
    <location>
        <begin position="463"/>
        <end position="469"/>
    </location>
</feature>
<feature type="strand" evidence="18">
    <location>
        <begin position="473"/>
        <end position="475"/>
    </location>
</feature>
<feature type="strand" evidence="19">
    <location>
        <begin position="484"/>
        <end position="487"/>
    </location>
</feature>
<feature type="helix" evidence="19">
    <location>
        <begin position="493"/>
        <end position="495"/>
    </location>
</feature>
<feature type="helix" evidence="19">
    <location>
        <begin position="501"/>
        <end position="512"/>
    </location>
</feature>
<feature type="helix" evidence="19">
    <location>
        <begin position="517"/>
        <end position="524"/>
    </location>
</feature>
<feature type="helix" evidence="19">
    <location>
        <begin position="527"/>
        <end position="535"/>
    </location>
</feature>
<feature type="helix" evidence="19">
    <location>
        <begin position="541"/>
        <end position="552"/>
    </location>
</feature>
<feature type="strand" evidence="22">
    <location>
        <begin position="553"/>
        <end position="555"/>
    </location>
</feature>
<feature type="helix" evidence="19">
    <location>
        <begin position="557"/>
        <end position="565"/>
    </location>
</feature>
<feature type="helix" evidence="19">
    <location>
        <begin position="567"/>
        <end position="577"/>
    </location>
</feature>
<name>NPL4_YEAST</name>
<organism>
    <name type="scientific">Saccharomyces cerevisiae (strain ATCC 204508 / S288c)</name>
    <name type="common">Baker's yeast</name>
    <dbReference type="NCBI Taxonomy" id="559292"/>
    <lineage>
        <taxon>Eukaryota</taxon>
        <taxon>Fungi</taxon>
        <taxon>Dikarya</taxon>
        <taxon>Ascomycota</taxon>
        <taxon>Saccharomycotina</taxon>
        <taxon>Saccharomycetes</taxon>
        <taxon>Saccharomycetales</taxon>
        <taxon>Saccharomycetaceae</taxon>
        <taxon>Saccharomyces</taxon>
    </lineage>
</organism>
<protein>
    <recommendedName>
        <fullName>Nuclear protein localization protein 4</fullName>
    </recommendedName>
    <alternativeName>
        <fullName>HMG-CoA reductase degradation protein 4</fullName>
    </alternativeName>
</protein>
<proteinExistence type="evidence at protein level"/>
<sequence length="580" mass="65782">MLIRFRSKNGTHRVSCQENDLFGTVIEKLVGNLDPNADVDTFTVCEKPGQGIHAVSELADRTVMDLGLKHGDMLILNYSDKPANEKDGVNVEIGSVGIDSKGIRQHRYGPLRIKELAVDEELEKEDGLIPRQKSKLCKHGDRGMCEYCSPLPPWDKEYHEKNKIKHISFHSYLKKLNENANKKENGSSYISPLSEPDFRINKRCHNGHEPWPRGICSKCQPSAITLQQQEFRMVDHVEFQKSEIINEFIQAWRYTGMQRFGYMYGSYSKYDNTPLGIKAVVEAIYEPPQHDEQDGLTMDVEQVKNEMLQIDRQAQEMGLSRIGLIFTDLSDAGAGDGSVFCKRHKDSFFLSSLEVIMAARHQTRHPNVSKYSEQGFFSSKFVTCVISGNLEGEIDISSYQVSTEAEALVTADMISGSTFPSMAYINDTTDERYVPEIFYMKSNEYGITVKENAKPAFPVDYLLVTLTHGFPNTDTETNSKFVSSTGFPWSNRQAMGQSQDYQELKKYLFNVASSGDFNLLHEKISNFHLLLYINSLQILSPDEWKLLIESAVKNEWEESLLKLVSSAGWQTLVMILQESG</sequence>